<comment type="function">
    <text evidence="1 3 4">A probable ATP-dependent DNA helicase implicated in DNA repair and the maintenance of genomic stability. Acts as an anti-recombinase to counteract toxic recombination and limit crossover during meiosis. Regulates meiotic recombination and crossover homeostasis by physically dissociating strand invasion events and thereby promotes noncrossover repair by meiotic synthesis dependent strand annealing (SDSA) as well as disassembly of D loop recombination intermediates.</text>
</comment>
<comment type="catalytic activity">
    <reaction evidence="1">
        <text>ATP + H2O = ADP + phosphate + H(+)</text>
        <dbReference type="Rhea" id="RHEA:13065"/>
        <dbReference type="ChEBI" id="CHEBI:15377"/>
        <dbReference type="ChEBI" id="CHEBI:15378"/>
        <dbReference type="ChEBI" id="CHEBI:30616"/>
        <dbReference type="ChEBI" id="CHEBI:43474"/>
        <dbReference type="ChEBI" id="CHEBI:456216"/>
    </reaction>
</comment>
<comment type="subcellular location">
    <subcellularLocation>
        <location evidence="1">Nucleus</location>
    </subcellularLocation>
</comment>
<comment type="disruption phenotype">
    <text evidence="3 4">Viable, although the brood size is reduced and the life cycle is retarded (at 20 degrees Celsius, worms take 24 hours longer to reach the gravid adult stage). The smaller brood size may result from replicative stress, which is often associated with a persistence of unrepaired DNA damage during development. Mutants show defective crossover interference with all double-strand breaks becoming crossovers and a compromised homeostasis after ionizing radiation. Synthetic lethality in worms lacking both rtel-1 and him-6, with a marked increase in the number of foci representing unresolved recombination intermediates.</text>
</comment>
<comment type="similarity">
    <text evidence="1">Belongs to the helicase family. RAD3/XPD subfamily.</text>
</comment>
<dbReference type="EC" id="5.6.2.-" evidence="1"/>
<dbReference type="EMBL" id="Z79754">
    <property type="protein sequence ID" value="CAB02102.1"/>
    <property type="molecule type" value="Genomic_DNA"/>
</dbReference>
<dbReference type="EMBL" id="Z83224">
    <property type="protein sequence ID" value="CAB02102.1"/>
    <property type="status" value="JOINED"/>
    <property type="molecule type" value="Genomic_DNA"/>
</dbReference>
<dbReference type="PIR" id="T21356">
    <property type="entry name" value="T21356"/>
</dbReference>
<dbReference type="RefSeq" id="NP_492769.1">
    <property type="nucleotide sequence ID" value="NM_060368.7"/>
</dbReference>
<dbReference type="SMR" id="Q93575"/>
<dbReference type="BioGRID" id="38360">
    <property type="interactions" value="3"/>
</dbReference>
<dbReference type="FunCoup" id="Q93575">
    <property type="interactions" value="2196"/>
</dbReference>
<dbReference type="IntAct" id="Q93575">
    <property type="interactions" value="2"/>
</dbReference>
<dbReference type="MINT" id="Q93575"/>
<dbReference type="STRING" id="6239.F25H2.13.2"/>
<dbReference type="PaxDb" id="6239-F25H2.13.2"/>
<dbReference type="EnsemblMetazoa" id="F25H2.13.1">
    <property type="protein sequence ID" value="F25H2.13.1"/>
    <property type="gene ID" value="WBGene00009124"/>
</dbReference>
<dbReference type="EnsemblMetazoa" id="F25H2.13.2">
    <property type="protein sequence ID" value="F25H2.13.2"/>
    <property type="gene ID" value="WBGene00009124"/>
</dbReference>
<dbReference type="GeneID" id="172946"/>
<dbReference type="KEGG" id="cel:CELE_F25H2.13"/>
<dbReference type="UCSC" id="F25H2.13">
    <property type="organism name" value="c. elegans"/>
</dbReference>
<dbReference type="AGR" id="WB:WBGene00009124"/>
<dbReference type="CTD" id="172946"/>
<dbReference type="WormBase" id="F25H2.13">
    <property type="protein sequence ID" value="CE15894"/>
    <property type="gene ID" value="WBGene00009124"/>
    <property type="gene designation" value="rtel-1"/>
</dbReference>
<dbReference type="eggNOG" id="KOG1132">
    <property type="taxonomic scope" value="Eukaryota"/>
</dbReference>
<dbReference type="GeneTree" id="ENSGT00950000182970"/>
<dbReference type="HOGENOM" id="CLU_006515_4_0_1"/>
<dbReference type="InParanoid" id="Q93575"/>
<dbReference type="OMA" id="NCATIVA"/>
<dbReference type="OrthoDB" id="19182at2759"/>
<dbReference type="PhylomeDB" id="Q93575"/>
<dbReference type="PRO" id="PR:Q93575"/>
<dbReference type="Proteomes" id="UP000001940">
    <property type="component" value="Chromosome I"/>
</dbReference>
<dbReference type="Bgee" id="WBGene00009124">
    <property type="expression patterns" value="Expressed in germ line (C elegans) and 4 other cell types or tissues"/>
</dbReference>
<dbReference type="GO" id="GO:0005634">
    <property type="term" value="C:nucleus"/>
    <property type="evidence" value="ECO:0000250"/>
    <property type="project" value="UniProtKB"/>
</dbReference>
<dbReference type="GO" id="GO:0051539">
    <property type="term" value="F:4 iron, 4 sulfur cluster binding"/>
    <property type="evidence" value="ECO:0007669"/>
    <property type="project" value="UniProtKB-UniRule"/>
</dbReference>
<dbReference type="GO" id="GO:0005524">
    <property type="term" value="F:ATP binding"/>
    <property type="evidence" value="ECO:0000250"/>
    <property type="project" value="UniProtKB"/>
</dbReference>
<dbReference type="GO" id="GO:0016887">
    <property type="term" value="F:ATP hydrolysis activity"/>
    <property type="evidence" value="ECO:0007669"/>
    <property type="project" value="RHEA"/>
</dbReference>
<dbReference type="GO" id="GO:0003677">
    <property type="term" value="F:DNA binding"/>
    <property type="evidence" value="ECO:0007669"/>
    <property type="project" value="UniProtKB-UniRule"/>
</dbReference>
<dbReference type="GO" id="GO:0003678">
    <property type="term" value="F:DNA helicase activity"/>
    <property type="evidence" value="ECO:0000250"/>
    <property type="project" value="UniProtKB"/>
</dbReference>
<dbReference type="GO" id="GO:0070182">
    <property type="term" value="F:DNA polymerase binding"/>
    <property type="evidence" value="ECO:0000318"/>
    <property type="project" value="GO_Central"/>
</dbReference>
<dbReference type="GO" id="GO:0046872">
    <property type="term" value="F:metal ion binding"/>
    <property type="evidence" value="ECO:0007669"/>
    <property type="project" value="UniProtKB-UniRule"/>
</dbReference>
<dbReference type="GO" id="GO:0006310">
    <property type="term" value="P:DNA recombination"/>
    <property type="evidence" value="ECO:0007669"/>
    <property type="project" value="InterPro"/>
</dbReference>
<dbReference type="GO" id="GO:0006281">
    <property type="term" value="P:DNA repair"/>
    <property type="evidence" value="ECO:0007669"/>
    <property type="project" value="UniProtKB-UniRule"/>
</dbReference>
<dbReference type="GO" id="GO:0006260">
    <property type="term" value="P:DNA replication"/>
    <property type="evidence" value="ECO:0007669"/>
    <property type="project" value="InterPro"/>
</dbReference>
<dbReference type="GO" id="GO:0045910">
    <property type="term" value="P:negative regulation of DNA recombination"/>
    <property type="evidence" value="ECO:0000318"/>
    <property type="project" value="GO_Central"/>
</dbReference>
<dbReference type="GO" id="GO:1904430">
    <property type="term" value="P:negative regulation of t-circle formation"/>
    <property type="evidence" value="ECO:0000318"/>
    <property type="project" value="GO_Central"/>
</dbReference>
<dbReference type="GO" id="GO:0010569">
    <property type="term" value="P:regulation of double-strand break repair via homologous recombination"/>
    <property type="evidence" value="ECO:0000316"/>
    <property type="project" value="UniProtKB"/>
</dbReference>
<dbReference type="GO" id="GO:0090657">
    <property type="term" value="P:telomeric loop disassembly"/>
    <property type="evidence" value="ECO:0000318"/>
    <property type="project" value="GO_Central"/>
</dbReference>
<dbReference type="CDD" id="cd17970">
    <property type="entry name" value="DEAHc_FancJ"/>
    <property type="match status" value="1"/>
</dbReference>
<dbReference type="FunFam" id="3.40.50.300:FF:001352">
    <property type="entry name" value="DNA repair helicase"/>
    <property type="match status" value="1"/>
</dbReference>
<dbReference type="Gene3D" id="3.40.50.300">
    <property type="entry name" value="P-loop containing nucleotide triphosphate hydrolases"/>
    <property type="match status" value="2"/>
</dbReference>
<dbReference type="HAMAP" id="MF_03065">
    <property type="entry name" value="RTEL1"/>
    <property type="match status" value="1"/>
</dbReference>
<dbReference type="InterPro" id="IPR006555">
    <property type="entry name" value="ATP-dep_Helicase_C"/>
</dbReference>
<dbReference type="InterPro" id="IPR045028">
    <property type="entry name" value="DinG/Rad3-like"/>
</dbReference>
<dbReference type="InterPro" id="IPR014013">
    <property type="entry name" value="Helic_SF1/SF2_ATP-bd_DinG/Rad3"/>
</dbReference>
<dbReference type="InterPro" id="IPR006554">
    <property type="entry name" value="Helicase-like_DEXD_c2"/>
</dbReference>
<dbReference type="InterPro" id="IPR027417">
    <property type="entry name" value="P-loop_NTPase"/>
</dbReference>
<dbReference type="InterPro" id="IPR010614">
    <property type="entry name" value="RAD3-like_helicase_DEAD"/>
</dbReference>
<dbReference type="InterPro" id="IPR013020">
    <property type="entry name" value="Rad3/Chl1-like"/>
</dbReference>
<dbReference type="InterPro" id="IPR030845">
    <property type="entry name" value="RTEL1"/>
</dbReference>
<dbReference type="NCBIfam" id="TIGR00604">
    <property type="entry name" value="rad3"/>
    <property type="match status" value="1"/>
</dbReference>
<dbReference type="PANTHER" id="PTHR11472">
    <property type="entry name" value="DNA REPAIR DEAD HELICASE RAD3/XP-D SUBFAMILY MEMBER"/>
    <property type="match status" value="1"/>
</dbReference>
<dbReference type="PANTHER" id="PTHR11472:SF34">
    <property type="entry name" value="REGULATOR OF TELOMERE ELONGATION HELICASE 1"/>
    <property type="match status" value="1"/>
</dbReference>
<dbReference type="Pfam" id="PF23109">
    <property type="entry name" value="ARCH_RTEL1"/>
    <property type="match status" value="1"/>
</dbReference>
<dbReference type="Pfam" id="PF06733">
    <property type="entry name" value="DEAD_2"/>
    <property type="match status" value="1"/>
</dbReference>
<dbReference type="Pfam" id="PF13307">
    <property type="entry name" value="Helicase_C_2"/>
    <property type="match status" value="1"/>
</dbReference>
<dbReference type="SMART" id="SM00488">
    <property type="entry name" value="DEXDc2"/>
    <property type="match status" value="1"/>
</dbReference>
<dbReference type="SMART" id="SM00491">
    <property type="entry name" value="HELICc2"/>
    <property type="match status" value="1"/>
</dbReference>
<dbReference type="SUPFAM" id="SSF52540">
    <property type="entry name" value="P-loop containing nucleoside triphosphate hydrolases"/>
    <property type="match status" value="1"/>
</dbReference>
<dbReference type="PROSITE" id="PS00690">
    <property type="entry name" value="DEAH_ATP_HELICASE"/>
    <property type="match status" value="1"/>
</dbReference>
<dbReference type="PROSITE" id="PS51193">
    <property type="entry name" value="HELICASE_ATP_BIND_2"/>
    <property type="match status" value="1"/>
</dbReference>
<organism>
    <name type="scientific">Caenorhabditis elegans</name>
    <dbReference type="NCBI Taxonomy" id="6239"/>
    <lineage>
        <taxon>Eukaryota</taxon>
        <taxon>Metazoa</taxon>
        <taxon>Ecdysozoa</taxon>
        <taxon>Nematoda</taxon>
        <taxon>Chromadorea</taxon>
        <taxon>Rhabditida</taxon>
        <taxon>Rhabditina</taxon>
        <taxon>Rhabditomorpha</taxon>
        <taxon>Rhabditoidea</taxon>
        <taxon>Rhabditidae</taxon>
        <taxon>Peloderinae</taxon>
        <taxon>Caenorhabditis</taxon>
    </lineage>
</organism>
<keyword id="KW-0004">4Fe-4S</keyword>
<keyword id="KW-0067">ATP-binding</keyword>
<keyword id="KW-0227">DNA damage</keyword>
<keyword id="KW-0234">DNA repair</keyword>
<keyword id="KW-0238">DNA-binding</keyword>
<keyword id="KW-0347">Helicase</keyword>
<keyword id="KW-0378">Hydrolase</keyword>
<keyword id="KW-0408">Iron</keyword>
<keyword id="KW-0411">Iron-sulfur</keyword>
<keyword id="KW-0413">Isomerase</keyword>
<keyword id="KW-0479">Metal-binding</keyword>
<keyword id="KW-0547">Nucleotide-binding</keyword>
<keyword id="KW-0539">Nucleus</keyword>
<keyword id="KW-1185">Reference proteome</keyword>
<reference key="1">
    <citation type="journal article" date="1998" name="Science">
        <title>Genome sequence of the nematode C. elegans: a platform for investigating biology.</title>
        <authorList>
            <consortium name="The C. elegans sequencing consortium"/>
        </authorList>
    </citation>
    <scope>NUCLEOTIDE SEQUENCE [LARGE SCALE GENOMIC DNA]</scope>
    <source>
        <strain>Bristol N2</strain>
    </source>
</reference>
<reference key="2">
    <citation type="journal article" date="2008" name="Cell">
        <title>RTEL1 maintains genomic stability by suppressing homologous recombination.</title>
        <authorList>
            <person name="Barber L.J."/>
            <person name="Youds J.L."/>
            <person name="Ward J.D."/>
            <person name="McIlwraith M.J."/>
            <person name="O'Neil N.J."/>
            <person name="Petalcorin M.I.R."/>
            <person name="Martin J.S."/>
            <person name="Collis S.J."/>
            <person name="Cantor S.B."/>
            <person name="Auclair M."/>
            <person name="Tissenbaum H."/>
            <person name="West S.C."/>
            <person name="Rose A.M."/>
            <person name="Boulton S.J."/>
        </authorList>
    </citation>
    <scope>FUNCTION</scope>
    <scope>DISRUPTION PHENOTYPE</scope>
</reference>
<reference key="3">
    <citation type="journal article" date="2010" name="Science">
        <title>RTEL-1 enforces meiotic crossover interference and homeostasis.</title>
        <authorList>
            <person name="Youds J.L."/>
            <person name="Mets D.G."/>
            <person name="McIlwraith M.J."/>
            <person name="Martin J.S."/>
            <person name="Ward J.D."/>
            <person name="Oneil N.J."/>
            <person name="Rose A.M."/>
            <person name="West S.C."/>
            <person name="Meyer B.J."/>
            <person name="Boulton S.J."/>
        </authorList>
    </citation>
    <scope>FUNCTION</scope>
    <scope>DISRUPTION PHENOTYPE</scope>
</reference>
<proteinExistence type="inferred from homology"/>
<name>RTEL1_CAEEL</name>
<protein>
    <recommendedName>
        <fullName evidence="1">Regulator of telomere elongation helicase 1 homolog</fullName>
        <ecNumber evidence="1">5.6.2.-</ecNumber>
    </recommendedName>
</protein>
<sequence>MPPKASNSTEVWINPKLSVKFPFEPYECQRIFMKNVVDVLDRKLDAALESPTGTGKTLSLLCSTLAWVQRQKETKPLDFATWQTSGAGGAEKTDEKLKSAYVPTIFYASRTHSQLEQVVHELNRTEYKWVKTTILGSREHFCINQKVKKIKESNRQAHVCRGLVSKRACHYYNKFDACTTDKMTEFLDKGEAMDIEDFVKLGTQNSLCPYFMSRQRSETAELILLPYNYIIDPKMRRRYKLDLKNSIVIFDEAHNLESICESNASAELTSTSIALCIEELKKVLALLVDEEETARSEADAETGAFGSAKIDLTKKLIENLRTEDLMTVLEKIFSLEEEMDKLFGSSQLKSVPPLSGKASDGEILLETLAKAGFDANSVERLVDVLRDAISYLLSKNEEVALTEKGDGMEKVADFLLSIYSTHAQDVAAAVGEETVKLVDRVDPKTVARNCKLYIQKDKDNEKLTIKYFCFQASISMRMLKMRGVRNVLLASGTLSPIQAFTYNMGLNFGAILENEHALKQVPVLTSIVTRGKRGGLAGSFQNRKNLDYVTGVAEALLRVMEVIPQGILIFFSSYSQMDELVATWKTTKWSSNSNESFWEKMEKTKRVVVEPRAKEELAAIRLRYTQGVSEQHGAALLAVCRGKVSEGIDFCDAESRAVIIIGIPYPPIHDERVVLKKMYLDDLMGRKDTKSERQSSQDWYQMEAFRAVNQAIGRVLRHKDDFGTVVLMDTRYASAKPEMFPKWLRNTISRSDTDGCALKTSRFFKERGHLIENSKTEYIKKQAKQCKSFRQVKQTAASDSKDDIIEITLEDMFSPANMKLEKKEITKLRPPQLIPSTSSVFSLPTNEDELKIKKWEQENDIQCLSSIPLESNKRKFKIETPGPSTSTLTQKSEPPKKKKILLLTRNTLPDEYQKAIEIPTSELLKDMSDDNKKQFATTLRSYKAESIRWDEVFQRFRPIFVPHKADLFIACSNVLRSEDKMKYLKKALESKIHT</sequence>
<accession>Q93575</accession>
<accession>P90854</accession>
<accession>P90855</accession>
<evidence type="ECO:0000255" key="1">
    <source>
        <dbReference type="HAMAP-Rule" id="MF_03065"/>
    </source>
</evidence>
<evidence type="ECO:0000256" key="2">
    <source>
        <dbReference type="SAM" id="MobiDB-lite"/>
    </source>
</evidence>
<evidence type="ECO:0000269" key="3">
    <source>
    </source>
</evidence>
<evidence type="ECO:0000269" key="4">
    <source>
    </source>
</evidence>
<feature type="chain" id="PRO_0000370616" description="Regulator of telomere elongation helicase 1 homolog">
    <location>
        <begin position="1"/>
        <end position="994"/>
    </location>
</feature>
<feature type="domain" description="Helicase ATP-binding" evidence="1">
    <location>
        <begin position="15"/>
        <end position="300"/>
    </location>
</feature>
<feature type="region of interest" description="Disordered" evidence="2">
    <location>
        <begin position="876"/>
        <end position="895"/>
    </location>
</feature>
<feature type="short sequence motif" description="DEAH box">
    <location>
        <begin position="251"/>
        <end position="254"/>
    </location>
</feature>
<feature type="compositionally biased region" description="Polar residues" evidence="2">
    <location>
        <begin position="882"/>
        <end position="892"/>
    </location>
</feature>
<feature type="binding site" evidence="1">
    <location>
        <begin position="50"/>
        <end position="57"/>
    </location>
    <ligand>
        <name>ATP</name>
        <dbReference type="ChEBI" id="CHEBI:30616"/>
    </ligand>
</feature>
<feature type="binding site" evidence="1">
    <location>
        <position position="142"/>
    </location>
    <ligand>
        <name>[4Fe-4S] cluster</name>
        <dbReference type="ChEBI" id="CHEBI:49883"/>
    </ligand>
</feature>
<feature type="binding site" evidence="1">
    <location>
        <position position="160"/>
    </location>
    <ligand>
        <name>[4Fe-4S] cluster</name>
        <dbReference type="ChEBI" id="CHEBI:49883"/>
    </ligand>
</feature>
<feature type="binding site" evidence="1">
    <location>
        <position position="169"/>
    </location>
    <ligand>
        <name>[4Fe-4S] cluster</name>
        <dbReference type="ChEBI" id="CHEBI:49883"/>
    </ligand>
</feature>
<feature type="binding site" evidence="1">
    <location>
        <position position="208"/>
    </location>
    <ligand>
        <name>[4Fe-4S] cluster</name>
        <dbReference type="ChEBI" id="CHEBI:49883"/>
    </ligand>
</feature>
<gene>
    <name evidence="1" type="primary">rtel-1</name>
    <name evidence="1" type="synonym">bch-1</name>
    <name type="ORF">F25H2.13</name>
</gene>